<comment type="function">
    <text evidence="1">Transfers the 4'-phosphopantetheine moiety from coenzyme A to a Ser of acyl-carrier-protein.</text>
</comment>
<comment type="catalytic activity">
    <reaction evidence="1">
        <text>apo-[ACP] + CoA = holo-[ACP] + adenosine 3',5'-bisphosphate + H(+)</text>
        <dbReference type="Rhea" id="RHEA:12068"/>
        <dbReference type="Rhea" id="RHEA-COMP:9685"/>
        <dbReference type="Rhea" id="RHEA-COMP:9690"/>
        <dbReference type="ChEBI" id="CHEBI:15378"/>
        <dbReference type="ChEBI" id="CHEBI:29999"/>
        <dbReference type="ChEBI" id="CHEBI:57287"/>
        <dbReference type="ChEBI" id="CHEBI:58343"/>
        <dbReference type="ChEBI" id="CHEBI:64479"/>
        <dbReference type="EC" id="2.7.8.7"/>
    </reaction>
</comment>
<comment type="cofactor">
    <cofactor evidence="1">
        <name>Mg(2+)</name>
        <dbReference type="ChEBI" id="CHEBI:18420"/>
    </cofactor>
</comment>
<comment type="subcellular location">
    <subcellularLocation>
        <location evidence="1">Cytoplasm</location>
    </subcellularLocation>
</comment>
<comment type="similarity">
    <text evidence="1">Belongs to the P-Pant transferase superfamily. AcpS family.</text>
</comment>
<protein>
    <recommendedName>
        <fullName evidence="1">Holo-[acyl-carrier-protein] synthase</fullName>
        <shortName evidence="1">Holo-ACP synthase</shortName>
        <ecNumber evidence="1">2.7.8.7</ecNumber>
    </recommendedName>
    <alternativeName>
        <fullName evidence="1">4'-phosphopantetheinyl transferase AcpS</fullName>
    </alternativeName>
</protein>
<dbReference type="EC" id="2.7.8.7" evidence="1"/>
<dbReference type="EMBL" id="CP000546">
    <property type="protein sequence ID" value="ABN03294.1"/>
    <property type="molecule type" value="Genomic_DNA"/>
</dbReference>
<dbReference type="RefSeq" id="WP_004191194.1">
    <property type="nucleotide sequence ID" value="NC_008836.1"/>
</dbReference>
<dbReference type="SMR" id="A2S9Z9"/>
<dbReference type="GeneID" id="93061005"/>
<dbReference type="KEGG" id="bml:BMA10229_A2819"/>
<dbReference type="HOGENOM" id="CLU_089696_3_1_4"/>
<dbReference type="Proteomes" id="UP000002283">
    <property type="component" value="Chromosome I"/>
</dbReference>
<dbReference type="GO" id="GO:0005737">
    <property type="term" value="C:cytoplasm"/>
    <property type="evidence" value="ECO:0007669"/>
    <property type="project" value="UniProtKB-SubCell"/>
</dbReference>
<dbReference type="GO" id="GO:0008897">
    <property type="term" value="F:holo-[acyl-carrier-protein] synthase activity"/>
    <property type="evidence" value="ECO:0007669"/>
    <property type="project" value="UniProtKB-UniRule"/>
</dbReference>
<dbReference type="GO" id="GO:0000287">
    <property type="term" value="F:magnesium ion binding"/>
    <property type="evidence" value="ECO:0007669"/>
    <property type="project" value="UniProtKB-UniRule"/>
</dbReference>
<dbReference type="GO" id="GO:0006633">
    <property type="term" value="P:fatty acid biosynthetic process"/>
    <property type="evidence" value="ECO:0007669"/>
    <property type="project" value="UniProtKB-UniRule"/>
</dbReference>
<dbReference type="Gene3D" id="3.90.470.20">
    <property type="entry name" value="4'-phosphopantetheinyl transferase domain"/>
    <property type="match status" value="1"/>
</dbReference>
<dbReference type="HAMAP" id="MF_00101">
    <property type="entry name" value="AcpS"/>
    <property type="match status" value="1"/>
</dbReference>
<dbReference type="InterPro" id="IPR008278">
    <property type="entry name" value="4-PPantetheinyl_Trfase_dom"/>
</dbReference>
<dbReference type="InterPro" id="IPR037143">
    <property type="entry name" value="4-PPantetheinyl_Trfase_dom_sf"/>
</dbReference>
<dbReference type="InterPro" id="IPR002582">
    <property type="entry name" value="ACPS"/>
</dbReference>
<dbReference type="InterPro" id="IPR004568">
    <property type="entry name" value="Ppantetheine-prot_Trfase_dom"/>
</dbReference>
<dbReference type="NCBIfam" id="TIGR00516">
    <property type="entry name" value="acpS"/>
    <property type="match status" value="1"/>
</dbReference>
<dbReference type="NCBIfam" id="TIGR00556">
    <property type="entry name" value="pantethn_trn"/>
    <property type="match status" value="1"/>
</dbReference>
<dbReference type="Pfam" id="PF01648">
    <property type="entry name" value="ACPS"/>
    <property type="match status" value="1"/>
</dbReference>
<dbReference type="SUPFAM" id="SSF56214">
    <property type="entry name" value="4'-phosphopantetheinyl transferase"/>
    <property type="match status" value="1"/>
</dbReference>
<evidence type="ECO:0000255" key="1">
    <source>
        <dbReference type="HAMAP-Rule" id="MF_00101"/>
    </source>
</evidence>
<keyword id="KW-0963">Cytoplasm</keyword>
<keyword id="KW-0275">Fatty acid biosynthesis</keyword>
<keyword id="KW-0276">Fatty acid metabolism</keyword>
<keyword id="KW-0444">Lipid biosynthesis</keyword>
<keyword id="KW-0443">Lipid metabolism</keyword>
<keyword id="KW-0460">Magnesium</keyword>
<keyword id="KW-0479">Metal-binding</keyword>
<keyword id="KW-0808">Transferase</keyword>
<feature type="chain" id="PRO_1000008398" description="Holo-[acyl-carrier-protein] synthase">
    <location>
        <begin position="1"/>
        <end position="143"/>
    </location>
</feature>
<feature type="binding site" evidence="1">
    <location>
        <position position="9"/>
    </location>
    <ligand>
        <name>Mg(2+)</name>
        <dbReference type="ChEBI" id="CHEBI:18420"/>
    </ligand>
</feature>
<feature type="binding site" evidence="1">
    <location>
        <position position="63"/>
    </location>
    <ligand>
        <name>Mg(2+)</name>
        <dbReference type="ChEBI" id="CHEBI:18420"/>
    </ligand>
</feature>
<reference key="1">
    <citation type="journal article" date="2010" name="Genome Biol. Evol.">
        <title>Continuing evolution of Burkholderia mallei through genome reduction and large-scale rearrangements.</title>
        <authorList>
            <person name="Losada L."/>
            <person name="Ronning C.M."/>
            <person name="DeShazer D."/>
            <person name="Woods D."/>
            <person name="Fedorova N."/>
            <person name="Kim H.S."/>
            <person name="Shabalina S.A."/>
            <person name="Pearson T.R."/>
            <person name="Brinkac L."/>
            <person name="Tan P."/>
            <person name="Nandi T."/>
            <person name="Crabtree J."/>
            <person name="Badger J."/>
            <person name="Beckstrom-Sternberg S."/>
            <person name="Saqib M."/>
            <person name="Schutzer S.E."/>
            <person name="Keim P."/>
            <person name="Nierman W.C."/>
        </authorList>
    </citation>
    <scope>NUCLEOTIDE SEQUENCE [LARGE SCALE GENOMIC DNA]</scope>
    <source>
        <strain>NCTC 10229</strain>
    </source>
</reference>
<organism>
    <name type="scientific">Burkholderia mallei (strain NCTC 10229)</name>
    <dbReference type="NCBI Taxonomy" id="412022"/>
    <lineage>
        <taxon>Bacteria</taxon>
        <taxon>Pseudomonadati</taxon>
        <taxon>Pseudomonadota</taxon>
        <taxon>Betaproteobacteria</taxon>
        <taxon>Burkholderiales</taxon>
        <taxon>Burkholderiaceae</taxon>
        <taxon>Burkholderia</taxon>
        <taxon>pseudomallei group</taxon>
    </lineage>
</organism>
<sequence>MAIYGIGTDLAQVSRIAAVLERTGGRFAEKVLGPDELRVFHARRARSEARGIAFLATRFSAKEAFSKAIGLGMHWPMTWRALQTLNRPSGEPYVVASGELAAWLDARGITARVTVSDERDYAVTFVVAEAPDDVAAARSGAAS</sequence>
<accession>A2S9Z9</accession>
<proteinExistence type="inferred from homology"/>
<gene>
    <name evidence="1" type="primary">acpS</name>
    <name type="ordered locus">BMA10229_A2819</name>
</gene>
<name>ACPS_BURM9</name>